<reference key="1">
    <citation type="submission" date="2006-06" db="EMBL/GenBank/DDBJ databases">
        <title>Complete sequence of chromosome of Mesorhizobium sp. BNC1.</title>
        <authorList>
            <consortium name="US DOE Joint Genome Institute"/>
            <person name="Copeland A."/>
            <person name="Lucas S."/>
            <person name="Lapidus A."/>
            <person name="Barry K."/>
            <person name="Detter J.C."/>
            <person name="Glavina del Rio T."/>
            <person name="Hammon N."/>
            <person name="Israni S."/>
            <person name="Dalin E."/>
            <person name="Tice H."/>
            <person name="Pitluck S."/>
            <person name="Chertkov O."/>
            <person name="Brettin T."/>
            <person name="Bruce D."/>
            <person name="Han C."/>
            <person name="Tapia R."/>
            <person name="Gilna P."/>
            <person name="Schmutz J."/>
            <person name="Larimer F."/>
            <person name="Land M."/>
            <person name="Hauser L."/>
            <person name="Kyrpides N."/>
            <person name="Mikhailova N."/>
            <person name="Richardson P."/>
        </authorList>
    </citation>
    <scope>NUCLEOTIDE SEQUENCE [LARGE SCALE GENOMIC DNA]</scope>
    <source>
        <strain>BNC1</strain>
    </source>
</reference>
<keyword id="KW-0687">Ribonucleoprotein</keyword>
<keyword id="KW-0689">Ribosomal protein</keyword>
<keyword id="KW-0694">RNA-binding</keyword>
<keyword id="KW-0699">rRNA-binding</keyword>
<keyword id="KW-0820">tRNA-binding</keyword>
<feature type="chain" id="PRO_0000306642" description="Small ribosomal subunit protein uS13">
    <location>
        <begin position="1"/>
        <end position="122"/>
    </location>
</feature>
<feature type="region of interest" description="Disordered" evidence="2">
    <location>
        <begin position="93"/>
        <end position="122"/>
    </location>
</feature>
<accession>Q11HS4</accession>
<sequence length="122" mass="13825">MARIAGVNIPTNKRVVIALQYIHGIGPKLAREITSKVGIPDDRRVHQLTDAEVLAIREAIDRDYQVEGDLRREVSMNIKRLMDLGCYRGLRHRRSLPVRGQRTHTNARTRKGPAKPIAGKKK</sequence>
<organism>
    <name type="scientific">Chelativorans sp. (strain BNC1)</name>
    <dbReference type="NCBI Taxonomy" id="266779"/>
    <lineage>
        <taxon>Bacteria</taxon>
        <taxon>Pseudomonadati</taxon>
        <taxon>Pseudomonadota</taxon>
        <taxon>Alphaproteobacteria</taxon>
        <taxon>Hyphomicrobiales</taxon>
        <taxon>Phyllobacteriaceae</taxon>
        <taxon>Chelativorans</taxon>
    </lineage>
</organism>
<protein>
    <recommendedName>
        <fullName evidence="1">Small ribosomal subunit protein uS13</fullName>
    </recommendedName>
    <alternativeName>
        <fullName evidence="3">30S ribosomal protein S13</fullName>
    </alternativeName>
</protein>
<comment type="function">
    <text evidence="1">Located at the top of the head of the 30S subunit, it contacts several helices of the 16S rRNA. In the 70S ribosome it contacts the 23S rRNA (bridge B1a) and protein L5 of the 50S subunit (bridge B1b), connecting the 2 subunits; these bridges are implicated in subunit movement. Contacts the tRNAs in the A and P-sites.</text>
</comment>
<comment type="subunit">
    <text evidence="1">Part of the 30S ribosomal subunit. Forms a loose heterodimer with protein S19. Forms two bridges to the 50S subunit in the 70S ribosome.</text>
</comment>
<comment type="similarity">
    <text evidence="1">Belongs to the universal ribosomal protein uS13 family.</text>
</comment>
<dbReference type="EMBL" id="CP000390">
    <property type="protein sequence ID" value="ABG63051.1"/>
    <property type="molecule type" value="Genomic_DNA"/>
</dbReference>
<dbReference type="SMR" id="Q11HS4"/>
<dbReference type="STRING" id="266779.Meso_1656"/>
<dbReference type="KEGG" id="mes:Meso_1656"/>
<dbReference type="eggNOG" id="COG0099">
    <property type="taxonomic scope" value="Bacteria"/>
</dbReference>
<dbReference type="HOGENOM" id="CLU_103849_1_2_5"/>
<dbReference type="OrthoDB" id="9803610at2"/>
<dbReference type="GO" id="GO:0005829">
    <property type="term" value="C:cytosol"/>
    <property type="evidence" value="ECO:0007669"/>
    <property type="project" value="TreeGrafter"/>
</dbReference>
<dbReference type="GO" id="GO:0015935">
    <property type="term" value="C:small ribosomal subunit"/>
    <property type="evidence" value="ECO:0007669"/>
    <property type="project" value="TreeGrafter"/>
</dbReference>
<dbReference type="GO" id="GO:0019843">
    <property type="term" value="F:rRNA binding"/>
    <property type="evidence" value="ECO:0007669"/>
    <property type="project" value="UniProtKB-UniRule"/>
</dbReference>
<dbReference type="GO" id="GO:0003735">
    <property type="term" value="F:structural constituent of ribosome"/>
    <property type="evidence" value="ECO:0007669"/>
    <property type="project" value="InterPro"/>
</dbReference>
<dbReference type="GO" id="GO:0000049">
    <property type="term" value="F:tRNA binding"/>
    <property type="evidence" value="ECO:0007669"/>
    <property type="project" value="UniProtKB-UniRule"/>
</dbReference>
<dbReference type="GO" id="GO:0006412">
    <property type="term" value="P:translation"/>
    <property type="evidence" value="ECO:0007669"/>
    <property type="project" value="UniProtKB-UniRule"/>
</dbReference>
<dbReference type="FunFam" id="1.10.8.50:FF:000001">
    <property type="entry name" value="30S ribosomal protein S13"/>
    <property type="match status" value="1"/>
</dbReference>
<dbReference type="FunFam" id="4.10.910.10:FF:000001">
    <property type="entry name" value="30S ribosomal protein S13"/>
    <property type="match status" value="1"/>
</dbReference>
<dbReference type="Gene3D" id="1.10.8.50">
    <property type="match status" value="1"/>
</dbReference>
<dbReference type="Gene3D" id="4.10.910.10">
    <property type="entry name" value="30s ribosomal protein s13, domain 2"/>
    <property type="match status" value="1"/>
</dbReference>
<dbReference type="HAMAP" id="MF_01315">
    <property type="entry name" value="Ribosomal_uS13"/>
    <property type="match status" value="1"/>
</dbReference>
<dbReference type="InterPro" id="IPR027437">
    <property type="entry name" value="Rbsml_uS13_C"/>
</dbReference>
<dbReference type="InterPro" id="IPR001892">
    <property type="entry name" value="Ribosomal_uS13"/>
</dbReference>
<dbReference type="InterPro" id="IPR010979">
    <property type="entry name" value="Ribosomal_uS13-like_H2TH"/>
</dbReference>
<dbReference type="InterPro" id="IPR019980">
    <property type="entry name" value="Ribosomal_uS13_bac-type"/>
</dbReference>
<dbReference type="InterPro" id="IPR018269">
    <property type="entry name" value="Ribosomal_uS13_CS"/>
</dbReference>
<dbReference type="NCBIfam" id="TIGR03631">
    <property type="entry name" value="uS13_bact"/>
    <property type="match status" value="1"/>
</dbReference>
<dbReference type="PANTHER" id="PTHR10871">
    <property type="entry name" value="30S RIBOSOMAL PROTEIN S13/40S RIBOSOMAL PROTEIN S18"/>
    <property type="match status" value="1"/>
</dbReference>
<dbReference type="PANTHER" id="PTHR10871:SF1">
    <property type="entry name" value="SMALL RIBOSOMAL SUBUNIT PROTEIN US13M"/>
    <property type="match status" value="1"/>
</dbReference>
<dbReference type="Pfam" id="PF00416">
    <property type="entry name" value="Ribosomal_S13"/>
    <property type="match status" value="1"/>
</dbReference>
<dbReference type="PIRSF" id="PIRSF002134">
    <property type="entry name" value="Ribosomal_S13"/>
    <property type="match status" value="1"/>
</dbReference>
<dbReference type="SUPFAM" id="SSF46946">
    <property type="entry name" value="S13-like H2TH domain"/>
    <property type="match status" value="1"/>
</dbReference>
<dbReference type="PROSITE" id="PS00646">
    <property type="entry name" value="RIBOSOMAL_S13_1"/>
    <property type="match status" value="1"/>
</dbReference>
<dbReference type="PROSITE" id="PS50159">
    <property type="entry name" value="RIBOSOMAL_S13_2"/>
    <property type="match status" value="1"/>
</dbReference>
<proteinExistence type="inferred from homology"/>
<evidence type="ECO:0000255" key="1">
    <source>
        <dbReference type="HAMAP-Rule" id="MF_01315"/>
    </source>
</evidence>
<evidence type="ECO:0000256" key="2">
    <source>
        <dbReference type="SAM" id="MobiDB-lite"/>
    </source>
</evidence>
<evidence type="ECO:0000305" key="3"/>
<gene>
    <name evidence="1" type="primary">rpsM</name>
    <name type="ordered locus">Meso_1656</name>
</gene>
<name>RS13_CHESB</name>